<dbReference type="EMBL" id="U04663">
    <property type="protein sequence ID" value="AAA67863.1"/>
    <property type="molecule type" value="mRNA"/>
</dbReference>
<dbReference type="GO" id="GO:0042600">
    <property type="term" value="C:egg chorion"/>
    <property type="evidence" value="ECO:0007669"/>
    <property type="project" value="InterPro"/>
</dbReference>
<dbReference type="GO" id="GO:0005213">
    <property type="term" value="F:structural constituent of egg chorion"/>
    <property type="evidence" value="ECO:0007669"/>
    <property type="project" value="InterPro"/>
</dbReference>
<dbReference type="GO" id="GO:0007304">
    <property type="term" value="P:chorion-containing eggshell formation"/>
    <property type="evidence" value="ECO:0007669"/>
    <property type="project" value="InterPro"/>
</dbReference>
<dbReference type="InterPro" id="IPR002635">
    <property type="entry name" value="Chorion"/>
</dbReference>
<dbReference type="Pfam" id="PF01723">
    <property type="entry name" value="Chorion_1"/>
    <property type="match status" value="2"/>
</dbReference>
<comment type="function">
    <text>This protein is one of many from the eggshell of the gypsy moth.</text>
</comment>
<comment type="similarity">
    <text evidence="2">Belongs to the chorion protein family.</text>
</comment>
<sequence>MNSFALLLVCIQACLVQSVFSQCTSRAAVAADRGIIGGYGLGTPCGLGYGLEAPYGRAGYADYGYPAGAYGIDAYGGIGEGNVAVAGELPVAGTTAVAGQVPIMGAVKFGGDVCAAGSVSIAGKCACGCGEYGYGLGAPYLY</sequence>
<protein>
    <recommendedName>
        <fullName>Chorion class A protein Ld12</fullName>
    </recommendedName>
</protein>
<name>CHA6_LYMDI</name>
<accession>P43516</accession>
<feature type="signal peptide" evidence="1">
    <location>
        <begin position="1"/>
        <end position="18"/>
    </location>
</feature>
<feature type="chain" id="PRO_0000005392" description="Chorion class A protein Ld12">
    <location>
        <begin position="19"/>
        <end position="142"/>
    </location>
</feature>
<reference key="1">
    <citation type="journal article" date="1994" name="J. Mol. Evol.">
        <title>Evolution of chorion gene families in lepidoptera: characterization of 15 cDNAs from the gypsy moth.</title>
        <authorList>
            <person name="Leclerc R.F."/>
            <person name="Regier J.C."/>
        </authorList>
    </citation>
    <scope>NUCLEOTIDE SEQUENCE [MRNA]</scope>
    <source>
        <tissue>Choriogenic follicle</tissue>
    </source>
</reference>
<organism>
    <name type="scientific">Lymantria dispar</name>
    <name type="common">Gypsy moth</name>
    <name type="synonym">Porthetria dispar</name>
    <dbReference type="NCBI Taxonomy" id="13123"/>
    <lineage>
        <taxon>Eukaryota</taxon>
        <taxon>Metazoa</taxon>
        <taxon>Ecdysozoa</taxon>
        <taxon>Arthropoda</taxon>
        <taxon>Hexapoda</taxon>
        <taxon>Insecta</taxon>
        <taxon>Pterygota</taxon>
        <taxon>Neoptera</taxon>
        <taxon>Endopterygota</taxon>
        <taxon>Lepidoptera</taxon>
        <taxon>Glossata</taxon>
        <taxon>Ditrysia</taxon>
        <taxon>Noctuoidea</taxon>
        <taxon>Erebidae</taxon>
        <taxon>Lymantriinae</taxon>
        <taxon>Lymantria</taxon>
    </lineage>
</organism>
<keyword id="KW-0677">Repeat</keyword>
<keyword id="KW-0732">Signal</keyword>
<evidence type="ECO:0000255" key="1"/>
<evidence type="ECO:0000305" key="2"/>
<proteinExistence type="evidence at transcript level"/>